<reference key="1">
    <citation type="submission" date="2004-03" db="EMBL/GenBank/DDBJ databases">
        <title>Molecular phylogenetics of the Soricidae (Insectivora, Mammalia) based on mitochondrial cytochrome b gene sequences.</title>
        <authorList>
            <person name="Ohdachi S.D."/>
            <person name="Iwasa M.A."/>
            <person name="Abe H."/>
            <person name="Vogel P."/>
            <person name="Oshida T."/>
            <person name="Lin L.K."/>
            <person name="Hasegawa M."/>
        </authorList>
    </citation>
    <scope>NUCLEOTIDE SEQUENCE [GENOMIC DNA]</scope>
</reference>
<evidence type="ECO:0000250" key="1"/>
<evidence type="ECO:0000250" key="2">
    <source>
        <dbReference type="UniProtKB" id="P00157"/>
    </source>
</evidence>
<evidence type="ECO:0000255" key="3">
    <source>
        <dbReference type="PROSITE-ProRule" id="PRU00967"/>
    </source>
</evidence>
<evidence type="ECO:0000255" key="4">
    <source>
        <dbReference type="PROSITE-ProRule" id="PRU00968"/>
    </source>
</evidence>
<comment type="function">
    <text evidence="2">Component of the ubiquinol-cytochrome c reductase complex (complex III or cytochrome b-c1 complex) that is part of the mitochondrial respiratory chain. The b-c1 complex mediates electron transfer from ubiquinol to cytochrome c. Contributes to the generation of a proton gradient across the mitochondrial membrane that is then used for ATP synthesis.</text>
</comment>
<comment type="cofactor">
    <cofactor evidence="2">
        <name>heme b</name>
        <dbReference type="ChEBI" id="CHEBI:60344"/>
    </cofactor>
    <text evidence="2">Binds 2 heme b groups non-covalently.</text>
</comment>
<comment type="subunit">
    <text evidence="2">The cytochrome bc1 complex contains 11 subunits: 3 respiratory subunits (MT-CYB, CYC1 and UQCRFS1), 2 core proteins (UQCRC1 and UQCRC2) and 6 low-molecular weight proteins (UQCRH/QCR6, UQCRB/QCR7, UQCRQ/QCR8, UQCR10/QCR9, UQCR11/QCR10 and a cleavage product of UQCRFS1). This cytochrome bc1 complex then forms a dimer.</text>
</comment>
<comment type="subcellular location">
    <subcellularLocation>
        <location evidence="2">Mitochondrion inner membrane</location>
        <topology evidence="2">Multi-pass membrane protein</topology>
    </subcellularLocation>
</comment>
<comment type="miscellaneous">
    <text evidence="1">Heme 1 (or BL or b562) is low-potential and absorbs at about 562 nm, and heme 2 (or BH or b566) is high-potential and absorbs at about 566 nm.</text>
</comment>
<comment type="similarity">
    <text evidence="3 4">Belongs to the cytochrome b family.</text>
</comment>
<comment type="caution">
    <text evidence="2">The full-length protein contains only eight transmembrane helices, not nine as predicted by bioinformatics tools.</text>
</comment>
<sequence length="379" mass="42584">MNNIRKTHPLMKIVNSSFIDLPAPSNISSWWNFGSLLGICLIAQILTGLFLAMHYTSDTMTAFSSVTHICRDVNYGWLIRYLHANGASMFFICLFLHVGRGLYYGSYMYLETWNIGVLLLFAVMATAFMGYVLPWGQMSFWGATVITNLLSAIPYIGTNLVEWIWGGFSVDKATLTRFFAFHFILPFIVAALAGVHLLFLHETGSNNPSGLNSDTDKIPFHPYYTIKDILGALIMITALTSLVLFSPDMLGDPDNYIPANPLNTPPHIKPEWYFLFAYAILRSIPNKLGGVLALVLSIAILTIIPLLHTAKQRSMMFRPMSQCLFWILVADLLTLTWIGGQPVEHPFVVIGQLASVIYFMLILLIMPITSMIENQLLKW</sequence>
<gene>
    <name type="primary">MT-CYB</name>
    <name type="synonym">COB</name>
    <name type="synonym">CYTB</name>
    <name type="synonym">MTCYB</name>
</gene>
<proteinExistence type="inferred from homology"/>
<geneLocation type="mitochondrion"/>
<organism>
    <name type="scientific">Crocidura attenuata</name>
    <name type="common">Asian gray shrew</name>
    <name type="synonym">Indochinese shrew</name>
    <dbReference type="NCBI Taxonomy" id="167044"/>
    <lineage>
        <taxon>Eukaryota</taxon>
        <taxon>Metazoa</taxon>
        <taxon>Chordata</taxon>
        <taxon>Craniata</taxon>
        <taxon>Vertebrata</taxon>
        <taxon>Euteleostomi</taxon>
        <taxon>Mammalia</taxon>
        <taxon>Eutheria</taxon>
        <taxon>Laurasiatheria</taxon>
        <taxon>Eulipotyphla</taxon>
        <taxon>Soricidae</taxon>
        <taxon>Crocidurinae</taxon>
        <taxon>Crocidura</taxon>
    </lineage>
</organism>
<name>CYB_CROAE</name>
<accession>Q1XIP8</accession>
<feature type="chain" id="PRO_0000257885" description="Cytochrome b">
    <location>
        <begin position="1"/>
        <end position="379"/>
    </location>
</feature>
<feature type="transmembrane region" description="Helical" evidence="2">
    <location>
        <begin position="33"/>
        <end position="53"/>
    </location>
</feature>
<feature type="transmembrane region" description="Helical" evidence="2">
    <location>
        <begin position="77"/>
        <end position="98"/>
    </location>
</feature>
<feature type="transmembrane region" description="Helical" evidence="2">
    <location>
        <begin position="113"/>
        <end position="133"/>
    </location>
</feature>
<feature type="transmembrane region" description="Helical" evidence="2">
    <location>
        <begin position="178"/>
        <end position="198"/>
    </location>
</feature>
<feature type="transmembrane region" description="Helical" evidence="2">
    <location>
        <begin position="226"/>
        <end position="246"/>
    </location>
</feature>
<feature type="transmembrane region" description="Helical" evidence="2">
    <location>
        <begin position="288"/>
        <end position="308"/>
    </location>
</feature>
<feature type="transmembrane region" description="Helical" evidence="2">
    <location>
        <begin position="320"/>
        <end position="340"/>
    </location>
</feature>
<feature type="transmembrane region" description="Helical" evidence="2">
    <location>
        <begin position="347"/>
        <end position="367"/>
    </location>
</feature>
<feature type="binding site" description="axial binding residue" evidence="2">
    <location>
        <position position="83"/>
    </location>
    <ligand>
        <name>heme b</name>
        <dbReference type="ChEBI" id="CHEBI:60344"/>
        <label>b562</label>
    </ligand>
    <ligandPart>
        <name>Fe</name>
        <dbReference type="ChEBI" id="CHEBI:18248"/>
    </ligandPart>
</feature>
<feature type="binding site" description="axial binding residue" evidence="2">
    <location>
        <position position="97"/>
    </location>
    <ligand>
        <name>heme b</name>
        <dbReference type="ChEBI" id="CHEBI:60344"/>
        <label>b566</label>
    </ligand>
    <ligandPart>
        <name>Fe</name>
        <dbReference type="ChEBI" id="CHEBI:18248"/>
    </ligandPart>
</feature>
<feature type="binding site" description="axial binding residue" evidence="2">
    <location>
        <position position="182"/>
    </location>
    <ligand>
        <name>heme b</name>
        <dbReference type="ChEBI" id="CHEBI:60344"/>
        <label>b562</label>
    </ligand>
    <ligandPart>
        <name>Fe</name>
        <dbReference type="ChEBI" id="CHEBI:18248"/>
    </ligandPart>
</feature>
<feature type="binding site" description="axial binding residue" evidence="2">
    <location>
        <position position="196"/>
    </location>
    <ligand>
        <name>heme b</name>
        <dbReference type="ChEBI" id="CHEBI:60344"/>
        <label>b566</label>
    </ligand>
    <ligandPart>
        <name>Fe</name>
        <dbReference type="ChEBI" id="CHEBI:18248"/>
    </ligandPart>
</feature>
<feature type="binding site" evidence="2">
    <location>
        <position position="201"/>
    </location>
    <ligand>
        <name>a ubiquinone</name>
        <dbReference type="ChEBI" id="CHEBI:16389"/>
    </ligand>
</feature>
<keyword id="KW-0249">Electron transport</keyword>
<keyword id="KW-0349">Heme</keyword>
<keyword id="KW-0408">Iron</keyword>
<keyword id="KW-0472">Membrane</keyword>
<keyword id="KW-0479">Metal-binding</keyword>
<keyword id="KW-0496">Mitochondrion</keyword>
<keyword id="KW-0999">Mitochondrion inner membrane</keyword>
<keyword id="KW-0679">Respiratory chain</keyword>
<keyword id="KW-0812">Transmembrane</keyword>
<keyword id="KW-1133">Transmembrane helix</keyword>
<keyword id="KW-0813">Transport</keyword>
<keyword id="KW-0830">Ubiquinone</keyword>
<dbReference type="EMBL" id="AB175082">
    <property type="protein sequence ID" value="BAE92647.1"/>
    <property type="molecule type" value="Genomic_DNA"/>
</dbReference>
<dbReference type="EMBL" id="AB175083">
    <property type="protein sequence ID" value="BAE92648.1"/>
    <property type="molecule type" value="Genomic_DNA"/>
</dbReference>
<dbReference type="SMR" id="Q1XIP8"/>
<dbReference type="GO" id="GO:0005743">
    <property type="term" value="C:mitochondrial inner membrane"/>
    <property type="evidence" value="ECO:0007669"/>
    <property type="project" value="UniProtKB-SubCell"/>
</dbReference>
<dbReference type="GO" id="GO:0045275">
    <property type="term" value="C:respiratory chain complex III"/>
    <property type="evidence" value="ECO:0007669"/>
    <property type="project" value="InterPro"/>
</dbReference>
<dbReference type="GO" id="GO:0046872">
    <property type="term" value="F:metal ion binding"/>
    <property type="evidence" value="ECO:0007669"/>
    <property type="project" value="UniProtKB-KW"/>
</dbReference>
<dbReference type="GO" id="GO:0008121">
    <property type="term" value="F:ubiquinol-cytochrome-c reductase activity"/>
    <property type="evidence" value="ECO:0007669"/>
    <property type="project" value="InterPro"/>
</dbReference>
<dbReference type="GO" id="GO:0006122">
    <property type="term" value="P:mitochondrial electron transport, ubiquinol to cytochrome c"/>
    <property type="evidence" value="ECO:0007669"/>
    <property type="project" value="TreeGrafter"/>
</dbReference>
<dbReference type="CDD" id="cd00290">
    <property type="entry name" value="cytochrome_b_C"/>
    <property type="match status" value="1"/>
</dbReference>
<dbReference type="CDD" id="cd00284">
    <property type="entry name" value="Cytochrome_b_N"/>
    <property type="match status" value="1"/>
</dbReference>
<dbReference type="FunFam" id="1.20.810.10:FF:000002">
    <property type="entry name" value="Cytochrome b"/>
    <property type="match status" value="1"/>
</dbReference>
<dbReference type="Gene3D" id="1.20.810.10">
    <property type="entry name" value="Cytochrome Bc1 Complex, Chain C"/>
    <property type="match status" value="1"/>
</dbReference>
<dbReference type="InterPro" id="IPR005798">
    <property type="entry name" value="Cyt_b/b6_C"/>
</dbReference>
<dbReference type="InterPro" id="IPR036150">
    <property type="entry name" value="Cyt_b/b6_C_sf"/>
</dbReference>
<dbReference type="InterPro" id="IPR005797">
    <property type="entry name" value="Cyt_b/b6_N"/>
</dbReference>
<dbReference type="InterPro" id="IPR027387">
    <property type="entry name" value="Cytb/b6-like_sf"/>
</dbReference>
<dbReference type="InterPro" id="IPR030689">
    <property type="entry name" value="Cytochrome_b"/>
</dbReference>
<dbReference type="InterPro" id="IPR048260">
    <property type="entry name" value="Cytochrome_b_C_euk/bac"/>
</dbReference>
<dbReference type="InterPro" id="IPR048259">
    <property type="entry name" value="Cytochrome_b_N_euk/bac"/>
</dbReference>
<dbReference type="InterPro" id="IPR016174">
    <property type="entry name" value="Di-haem_cyt_TM"/>
</dbReference>
<dbReference type="PANTHER" id="PTHR19271">
    <property type="entry name" value="CYTOCHROME B"/>
    <property type="match status" value="1"/>
</dbReference>
<dbReference type="PANTHER" id="PTHR19271:SF16">
    <property type="entry name" value="CYTOCHROME B"/>
    <property type="match status" value="1"/>
</dbReference>
<dbReference type="Pfam" id="PF00032">
    <property type="entry name" value="Cytochrom_B_C"/>
    <property type="match status" value="1"/>
</dbReference>
<dbReference type="Pfam" id="PF00033">
    <property type="entry name" value="Cytochrome_B"/>
    <property type="match status" value="1"/>
</dbReference>
<dbReference type="PIRSF" id="PIRSF038885">
    <property type="entry name" value="COB"/>
    <property type="match status" value="1"/>
</dbReference>
<dbReference type="SUPFAM" id="SSF81648">
    <property type="entry name" value="a domain/subunit of cytochrome bc1 complex (Ubiquinol-cytochrome c reductase)"/>
    <property type="match status" value="1"/>
</dbReference>
<dbReference type="SUPFAM" id="SSF81342">
    <property type="entry name" value="Transmembrane di-heme cytochromes"/>
    <property type="match status" value="1"/>
</dbReference>
<dbReference type="PROSITE" id="PS51003">
    <property type="entry name" value="CYTB_CTER"/>
    <property type="match status" value="1"/>
</dbReference>
<dbReference type="PROSITE" id="PS51002">
    <property type="entry name" value="CYTB_NTER"/>
    <property type="match status" value="1"/>
</dbReference>
<protein>
    <recommendedName>
        <fullName>Cytochrome b</fullName>
    </recommendedName>
    <alternativeName>
        <fullName>Complex III subunit 3</fullName>
    </alternativeName>
    <alternativeName>
        <fullName>Complex III subunit III</fullName>
    </alternativeName>
    <alternativeName>
        <fullName>Cytochrome b-c1 complex subunit 3</fullName>
    </alternativeName>
    <alternativeName>
        <fullName>Ubiquinol-cytochrome-c reductase complex cytochrome b subunit</fullName>
    </alternativeName>
</protein>